<accession>O15069</accession>
<reference key="1">
    <citation type="journal article" date="2003" name="Nature">
        <title>The DNA sequence of human chromosome 7.</title>
        <authorList>
            <person name="Hillier L.W."/>
            <person name="Fulton R.S."/>
            <person name="Fulton L.A."/>
            <person name="Graves T.A."/>
            <person name="Pepin K.H."/>
            <person name="Wagner-McPherson C."/>
            <person name="Layman D."/>
            <person name="Maas J."/>
            <person name="Jaeger S."/>
            <person name="Walker R."/>
            <person name="Wylie K."/>
            <person name="Sekhon M."/>
            <person name="Becker M.C."/>
            <person name="O'Laughlin M.D."/>
            <person name="Schaller M.E."/>
            <person name="Fewell G.A."/>
            <person name="Delehaunty K.D."/>
            <person name="Miner T.L."/>
            <person name="Nash W.E."/>
            <person name="Cordes M."/>
            <person name="Du H."/>
            <person name="Sun H."/>
            <person name="Edwards J."/>
            <person name="Bradshaw-Cordum H."/>
            <person name="Ali J."/>
            <person name="Andrews S."/>
            <person name="Isak A."/>
            <person name="Vanbrunt A."/>
            <person name="Nguyen C."/>
            <person name="Du F."/>
            <person name="Lamar B."/>
            <person name="Courtney L."/>
            <person name="Kalicki J."/>
            <person name="Ozersky P."/>
            <person name="Bielicki L."/>
            <person name="Scott K."/>
            <person name="Holmes A."/>
            <person name="Harkins R."/>
            <person name="Harris A."/>
            <person name="Strong C.M."/>
            <person name="Hou S."/>
            <person name="Tomlinson C."/>
            <person name="Dauphin-Kohlberg S."/>
            <person name="Kozlowicz-Reilly A."/>
            <person name="Leonard S."/>
            <person name="Rohlfing T."/>
            <person name="Rock S.M."/>
            <person name="Tin-Wollam A.-M."/>
            <person name="Abbott A."/>
            <person name="Minx P."/>
            <person name="Maupin R."/>
            <person name="Strowmatt C."/>
            <person name="Latreille P."/>
            <person name="Miller N."/>
            <person name="Johnson D."/>
            <person name="Murray J."/>
            <person name="Woessner J.P."/>
            <person name="Wendl M.C."/>
            <person name="Yang S.-P."/>
            <person name="Schultz B.R."/>
            <person name="Wallis J.W."/>
            <person name="Spieth J."/>
            <person name="Bieri T.A."/>
            <person name="Nelson J.O."/>
            <person name="Berkowicz N."/>
            <person name="Wohldmann P.E."/>
            <person name="Cook L.L."/>
            <person name="Hickenbotham M.T."/>
            <person name="Eldred J."/>
            <person name="Williams D."/>
            <person name="Bedell J.A."/>
            <person name="Mardis E.R."/>
            <person name="Clifton S.W."/>
            <person name="Chissoe S.L."/>
            <person name="Marra M.A."/>
            <person name="Raymond C."/>
            <person name="Haugen E."/>
            <person name="Gillett W."/>
            <person name="Zhou Y."/>
            <person name="James R."/>
            <person name="Phelps K."/>
            <person name="Iadanoto S."/>
            <person name="Bubb K."/>
            <person name="Simms E."/>
            <person name="Levy R."/>
            <person name="Clendenning J."/>
            <person name="Kaul R."/>
            <person name="Kent W.J."/>
            <person name="Furey T.S."/>
            <person name="Baertsch R.A."/>
            <person name="Brent M.R."/>
            <person name="Keibler E."/>
            <person name="Flicek P."/>
            <person name="Bork P."/>
            <person name="Suyama M."/>
            <person name="Bailey J.A."/>
            <person name="Portnoy M.E."/>
            <person name="Torrents D."/>
            <person name="Chinwalla A.T."/>
            <person name="Gish W.R."/>
            <person name="Eddy S.R."/>
            <person name="McPherson J.D."/>
            <person name="Olson M.V."/>
            <person name="Eichler E.E."/>
            <person name="Green E.D."/>
            <person name="Waterston R.H."/>
            <person name="Wilson R.K."/>
        </authorList>
    </citation>
    <scope>NUCLEOTIDE SEQUENCE [LARGE SCALE GENOMIC DNA]</scope>
</reference>
<reference key="2">
    <citation type="journal article" date="1997" name="DNA Res.">
        <title>Prediction of the coding sequences of unidentified human genes. VII. The complete sequences of 100 new cDNA clones from brain which can code for large proteins in vitro.</title>
        <authorList>
            <person name="Nagase T."/>
            <person name="Ishikawa K."/>
            <person name="Nakajima D."/>
            <person name="Ohira M."/>
            <person name="Seki N."/>
            <person name="Miyajima N."/>
            <person name="Tanaka A."/>
            <person name="Kotani H."/>
            <person name="Nomura N."/>
            <person name="Ohara O."/>
        </authorList>
    </citation>
    <scope>NUCLEOTIDE SEQUENCE [LARGE SCALE MRNA] OF 41-1562</scope>
    <source>
        <tissue>Brain</tissue>
    </source>
</reference>
<reference key="3">
    <citation type="journal article" date="2011" name="Sci. Signal.">
        <title>System-wide temporal characterization of the proteome and phosphoproteome of human embryonic stem cell differentiation.</title>
        <authorList>
            <person name="Rigbolt K.T."/>
            <person name="Prokhorova T.A."/>
            <person name="Akimov V."/>
            <person name="Henningsen J."/>
            <person name="Johansen P.T."/>
            <person name="Kratchmarova I."/>
            <person name="Kassem M."/>
            <person name="Mann M."/>
            <person name="Olsen J.V."/>
            <person name="Blagoev B."/>
        </authorList>
    </citation>
    <scope>PHOSPHORYLATION [LARGE SCALE ANALYSIS] AT SER-1068</scope>
    <scope>IDENTIFICATION BY MASS SPECTROMETRY [LARGE SCALE ANALYSIS]</scope>
</reference>
<comment type="function">
    <text evidence="1">May prevent inappropriate targeting of non-secretory polypeptides to the endoplasmic reticulum (ER). May bind to nascent polypeptide chains as they emerge from the ribosome and block their interaction with the signal recognition particle (SRP), which normally targets nascent secretory peptides to the ER. May also reduce the inherent affinity of ribosomes for protein translocation sites in the ER membrane (M sites) (By similarity).</text>
</comment>
<comment type="interaction">
    <interactant intactId="EBI-7108375">
        <id>O15069</id>
    </interactant>
    <interactant intactId="EBI-16466949">
        <id>Q13216-2</id>
        <label>ERCC8</label>
    </interactant>
    <organismsDiffer>false</organismsDiffer>
    <experiments>3</experiments>
</comment>
<comment type="interaction">
    <interactant intactId="EBI-7108375">
        <id>O15069</id>
    </interactant>
    <interactant intactId="EBI-747754">
        <id>P28799</id>
        <label>GRN</label>
    </interactant>
    <organismsDiffer>false</organismsDiffer>
    <experiments>3</experiments>
</comment>
<comment type="interaction">
    <interactant intactId="EBI-7108375">
        <id>O15069</id>
    </interactant>
    <interactant intactId="EBI-466029">
        <id>P42858</id>
        <label>HTT</label>
    </interactant>
    <organismsDiffer>false</organismsDiffer>
    <experiments>15</experiments>
</comment>
<comment type="subcellular location">
    <subcellularLocation>
        <location evidence="1">Cytoplasm</location>
    </subcellularLocation>
    <subcellularLocation>
        <location evidence="1">Nucleus</location>
    </subcellularLocation>
</comment>
<comment type="similarity">
    <text evidence="5">Belongs to the NAC-alpha family.</text>
</comment>
<gene>
    <name type="primary">NACAD</name>
    <name type="synonym">KIAA0363</name>
</gene>
<proteinExistence type="evidence at protein level"/>
<feature type="chain" id="PRO_0000280748" description="NAC-alpha domain-containing protein 1">
    <location>
        <begin position="1"/>
        <end position="1562"/>
    </location>
</feature>
<feature type="domain" description="NAC-A/B" evidence="3">
    <location>
        <begin position="1411"/>
        <end position="1476"/>
    </location>
</feature>
<feature type="region of interest" description="Disordered" evidence="4">
    <location>
        <begin position="1"/>
        <end position="24"/>
    </location>
</feature>
<feature type="region of interest" description="Disordered" evidence="4">
    <location>
        <begin position="56"/>
        <end position="110"/>
    </location>
</feature>
<feature type="region of interest" description="Disordered" evidence="4">
    <location>
        <begin position="131"/>
        <end position="226"/>
    </location>
</feature>
<feature type="region of interest" description="Disordered" evidence="4">
    <location>
        <begin position="249"/>
        <end position="288"/>
    </location>
</feature>
<feature type="region of interest" description="Disordered" evidence="4">
    <location>
        <begin position="327"/>
        <end position="365"/>
    </location>
</feature>
<feature type="region of interest" description="Disordered" evidence="4">
    <location>
        <begin position="381"/>
        <end position="458"/>
    </location>
</feature>
<feature type="region of interest" description="Disordered" evidence="4">
    <location>
        <begin position="503"/>
        <end position="941"/>
    </location>
</feature>
<feature type="region of interest" description="Disordered" evidence="4">
    <location>
        <begin position="953"/>
        <end position="1423"/>
    </location>
</feature>
<feature type="compositionally biased region" description="Low complexity" evidence="4">
    <location>
        <begin position="1"/>
        <end position="13"/>
    </location>
</feature>
<feature type="compositionally biased region" description="Basic and acidic residues" evidence="4">
    <location>
        <begin position="195"/>
        <end position="208"/>
    </location>
</feature>
<feature type="compositionally biased region" description="Low complexity" evidence="4">
    <location>
        <begin position="275"/>
        <end position="287"/>
    </location>
</feature>
<feature type="compositionally biased region" description="Acidic residues" evidence="4">
    <location>
        <begin position="331"/>
        <end position="340"/>
    </location>
</feature>
<feature type="compositionally biased region" description="Low complexity" evidence="4">
    <location>
        <begin position="385"/>
        <end position="397"/>
    </location>
</feature>
<feature type="compositionally biased region" description="Polar residues" evidence="4">
    <location>
        <begin position="449"/>
        <end position="458"/>
    </location>
</feature>
<feature type="compositionally biased region" description="Polar residues" evidence="4">
    <location>
        <begin position="550"/>
        <end position="564"/>
    </location>
</feature>
<feature type="compositionally biased region" description="Low complexity" evidence="4">
    <location>
        <begin position="992"/>
        <end position="1007"/>
    </location>
</feature>
<feature type="compositionally biased region" description="Basic and acidic residues" evidence="4">
    <location>
        <begin position="1048"/>
        <end position="1074"/>
    </location>
</feature>
<feature type="compositionally biased region" description="Low complexity" evidence="4">
    <location>
        <begin position="1172"/>
        <end position="1182"/>
    </location>
</feature>
<feature type="compositionally biased region" description="Low complexity" evidence="4">
    <location>
        <begin position="1231"/>
        <end position="1241"/>
    </location>
</feature>
<feature type="compositionally biased region" description="Acidic residues" evidence="4">
    <location>
        <begin position="1254"/>
        <end position="1264"/>
    </location>
</feature>
<feature type="compositionally biased region" description="Low complexity" evidence="4">
    <location>
        <begin position="1265"/>
        <end position="1284"/>
    </location>
</feature>
<feature type="compositionally biased region" description="Low complexity" evidence="4">
    <location>
        <begin position="1298"/>
        <end position="1308"/>
    </location>
</feature>
<feature type="compositionally biased region" description="Low complexity" evidence="4">
    <location>
        <begin position="1335"/>
        <end position="1344"/>
    </location>
</feature>
<feature type="compositionally biased region" description="Acidic residues" evidence="4">
    <location>
        <begin position="1348"/>
        <end position="1357"/>
    </location>
</feature>
<feature type="modified residue" description="Phosphoserine" evidence="6">
    <location>
        <position position="1068"/>
    </location>
</feature>
<feature type="modified residue" description="Phosphoserine" evidence="2">
    <location>
        <position position="1354"/>
    </location>
</feature>
<feature type="sequence variant" id="VAR_031195" description="In dbSNP:rs3735495.">
    <original>D</original>
    <variation>E</variation>
    <location>
        <position position="438"/>
    </location>
</feature>
<feature type="sequence variant" id="VAR_031196" description="In dbSNP:rs3735494.">
    <original>V</original>
    <variation>A</variation>
    <location>
        <position position="498"/>
    </location>
</feature>
<feature type="sequence variant" id="VAR_031197" description="In dbSNP:rs7777835.">
    <original>K</original>
    <variation>E</variation>
    <location>
        <position position="591"/>
    </location>
</feature>
<feature type="sequence variant" id="VAR_031198" description="In dbSNP:rs10243185.">
    <original>D</original>
    <variation>E</variation>
    <location>
        <position position="1105"/>
    </location>
</feature>
<feature type="sequence variant" id="VAR_031199" description="In dbSNP:rs3735493.">
    <original>C</original>
    <variation>F</variation>
    <location>
        <position position="1152"/>
    </location>
</feature>
<feature type="sequence conflict" description="In Ref. 2; BAA20818." evidence="5" ref="2">
    <original>P</original>
    <variation>L</variation>
    <location>
        <position position="1086"/>
    </location>
</feature>
<protein>
    <recommendedName>
        <fullName>NAC-alpha domain-containing protein 1</fullName>
    </recommendedName>
</protein>
<name>NACAD_HUMAN</name>
<sequence length="1562" mass="161101">MPGEAARAELLLPEADRPGPRTDLSCDAAAATTILGGDRREPCALTPGPSHLALTFLPSKPGARPQPEGASWDAGPGGAPSAWADPGEGGPSPMLLPEGLSSQALSTEAPLPATLEPRIVMGEETCQALLSPRAARTALRDQEGGHASPDPPPELCSQGDLSVPSPPPDPDSFFTPPSTPTKTTYALLPACGPHGDARDSEAELRDELLDSPPASPSGSYITADGDSWASSPSCSLSLLAPAEGLDFPSGWGLSPQGSMVDERELHPAGTPEPPSSESSLSADSSSSWGQEGHFFDLDFLANDPMIPAALLPFQGSLIFQVEAVEVTPLSPEEEEEEAVADPDPGGDLAGEGEEDSTSASFLQSLSDLSITEGMDEAFAFRDDTSAASSDSDSASYAEADDERLYSGEPHAQATLLQDSVQKTEEESGGGAKGLQAQDGTVSWAVEAAPQTSDRGAYLSQRQELISEVTEEGLALGQESTATVTPHTLQVAPGLQVEVATRVTPQAGEEETDSTAGQESAAMAMPQPSQEGISEILGQESVTAEKLPTPQEETSLTLCPDSPQNLKEEGGLDLPSGRKPVAAATIVPRQAKEDLTLPQDSAMTPPLPLQDTDLSSAPKPVAAATIVSQQAEEGLTLPQDSVMTPPLPLQDTELSSAPKPVAAATLVSQQAEEGLTLPQDSAMTPPLPLQDTDLSSAPKPVAAATLVSQQAEEGLTLPQDSAMTPPLPLQDTDLSSAPKPVAAATLVSQQAEEGLTLPQDSAMTPPLPLQDTDLSSAPKPVAAATIVSQQAEEGLTLPQDSAMTPPLPLQDTDLSSAPKPVAAATIVSQQAEEGLTLPQDSAMTPPLPLQDTDLSSAPKPVAAATPVSQQAEEGLTLPQDSAMTPPLPLQDTDLSSAPKPVAAATPVSQQAEEGLTLPQDSAMTAPLPLQDTGPTSGPEPLAVATPQTLQAEAGCAPGTEPVATMAQQEVGEALGPRPAPEEKNAALPTVPEPAALDQVQQDDPQPAAEAGTPWAAQEDADSTLGMEALSLPEPASGAGEEIAEALSRPGREACLEARAHTGDGAKPDSPQKETLEVENQQEGGLKPLAQEHGPRSALGGAREVPDAPPAACPEVSQARLLSPAREERGLSGKSTPEPTLPSAVATEASLDSCPESSVGAVSSLDRGCPDAPAPTSAPTSQQPEPVLGLGSVEQPHEVPSVLGTPLLQPPENLAKGQPSTPVDRPLGPDPSAPGTLAGAALPPLEPPAPCLCQDPQEDSVEDEEPPGSLGLPPPQAGVQPAAAAVSGTTQPLGTGPRVSLSPHSPLLSPKVASMDAKDLALQILPPCQVPPPSGPQSPAGPQGLSAPEQQEDEDSLEEDSPRALGSGQHSDSHGESSAELDEQDILAPQTVQCPAQAPAGGSEETIAKAKQSRSEKKARKAMSKLGLRQIQGVTRITIQKSKNILFVIAKPDVFKSPASDTYVVFGEAKIEDLSQQVHKAAAEKFKVPSEPSALVPESAPRPRVRLECKEEEEEEEEEVDEAGLELRDIELVMAQANVSRAKAVRALRDNHSDIVNAIMELTM</sequence>
<evidence type="ECO:0000250" key="1"/>
<evidence type="ECO:0000250" key="2">
    <source>
        <dbReference type="UniProtKB" id="Q5SWP3"/>
    </source>
</evidence>
<evidence type="ECO:0000255" key="3">
    <source>
        <dbReference type="PROSITE-ProRule" id="PRU00507"/>
    </source>
</evidence>
<evidence type="ECO:0000256" key="4">
    <source>
        <dbReference type="SAM" id="MobiDB-lite"/>
    </source>
</evidence>
<evidence type="ECO:0000305" key="5"/>
<evidence type="ECO:0007744" key="6">
    <source>
    </source>
</evidence>
<keyword id="KW-0963">Cytoplasm</keyword>
<keyword id="KW-0539">Nucleus</keyword>
<keyword id="KW-0597">Phosphoprotein</keyword>
<keyword id="KW-0653">Protein transport</keyword>
<keyword id="KW-1267">Proteomics identification</keyword>
<keyword id="KW-1185">Reference proteome</keyword>
<keyword id="KW-0813">Transport</keyword>
<organism>
    <name type="scientific">Homo sapiens</name>
    <name type="common">Human</name>
    <dbReference type="NCBI Taxonomy" id="9606"/>
    <lineage>
        <taxon>Eukaryota</taxon>
        <taxon>Metazoa</taxon>
        <taxon>Chordata</taxon>
        <taxon>Craniata</taxon>
        <taxon>Vertebrata</taxon>
        <taxon>Euteleostomi</taxon>
        <taxon>Mammalia</taxon>
        <taxon>Eutheria</taxon>
        <taxon>Euarchontoglires</taxon>
        <taxon>Primates</taxon>
        <taxon>Haplorrhini</taxon>
        <taxon>Catarrhini</taxon>
        <taxon>Hominidae</taxon>
        <taxon>Homo</taxon>
    </lineage>
</organism>
<dbReference type="EMBL" id="AC013416">
    <property type="status" value="NOT_ANNOTATED_CDS"/>
    <property type="molecule type" value="Genomic_DNA"/>
</dbReference>
<dbReference type="EMBL" id="AB002361">
    <property type="protein sequence ID" value="BAA20818.1"/>
    <property type="molecule type" value="mRNA"/>
</dbReference>
<dbReference type="CCDS" id="CCDS47582.1"/>
<dbReference type="RefSeq" id="NP_001139806.1">
    <property type="nucleotide sequence ID" value="NM_001146334.2"/>
</dbReference>
<dbReference type="SMR" id="O15069"/>
<dbReference type="BioGRID" id="116763">
    <property type="interactions" value="22"/>
</dbReference>
<dbReference type="FunCoup" id="O15069">
    <property type="interactions" value="563"/>
</dbReference>
<dbReference type="IntAct" id="O15069">
    <property type="interactions" value="22"/>
</dbReference>
<dbReference type="MINT" id="O15069"/>
<dbReference type="STRING" id="9606.ENSP00000420477"/>
<dbReference type="GlyGen" id="O15069">
    <property type="glycosylation" value="3 sites, 1 O-linked glycan (1 site)"/>
</dbReference>
<dbReference type="iPTMnet" id="O15069"/>
<dbReference type="PhosphoSitePlus" id="O15069"/>
<dbReference type="BioMuta" id="NACAD"/>
<dbReference type="jPOST" id="O15069"/>
<dbReference type="MassIVE" id="O15069"/>
<dbReference type="PaxDb" id="9606-ENSP00000420477"/>
<dbReference type="PeptideAtlas" id="O15069"/>
<dbReference type="ProteomicsDB" id="48426"/>
<dbReference type="Antibodypedia" id="56503">
    <property type="antibodies" value="73 antibodies from 21 providers"/>
</dbReference>
<dbReference type="DNASU" id="23148"/>
<dbReference type="Ensembl" id="ENST00000490531.3">
    <property type="protein sequence ID" value="ENSP00000420477.2"/>
    <property type="gene ID" value="ENSG00000136274.9"/>
</dbReference>
<dbReference type="GeneID" id="23148"/>
<dbReference type="KEGG" id="hsa:23148"/>
<dbReference type="MANE-Select" id="ENST00000490531.3">
    <property type="protein sequence ID" value="ENSP00000420477.2"/>
    <property type="RefSeq nucleotide sequence ID" value="NM_001146334.2"/>
    <property type="RefSeq protein sequence ID" value="NP_001139806.1"/>
</dbReference>
<dbReference type="UCSC" id="uc003tmt.4">
    <property type="organism name" value="human"/>
</dbReference>
<dbReference type="AGR" id="HGNC:22196"/>
<dbReference type="CTD" id="23148"/>
<dbReference type="DisGeNET" id="23148"/>
<dbReference type="GeneCards" id="NACAD"/>
<dbReference type="HGNC" id="HGNC:22196">
    <property type="gene designation" value="NACAD"/>
</dbReference>
<dbReference type="HPA" id="ENSG00000136274">
    <property type="expression patterns" value="Group enriched (brain, pituitary gland)"/>
</dbReference>
<dbReference type="MIM" id="619419">
    <property type="type" value="gene"/>
</dbReference>
<dbReference type="neXtProt" id="NX_O15069"/>
<dbReference type="OpenTargets" id="ENSG00000136274"/>
<dbReference type="PharmGKB" id="PA162396706"/>
<dbReference type="VEuPathDB" id="HostDB:ENSG00000136274"/>
<dbReference type="eggNOG" id="KOG2239">
    <property type="taxonomic scope" value="Eukaryota"/>
</dbReference>
<dbReference type="GeneTree" id="ENSGT00940000161501"/>
<dbReference type="HOGENOM" id="CLU_005021_0_0_1"/>
<dbReference type="InParanoid" id="O15069"/>
<dbReference type="OMA" id="CLCQDPQ"/>
<dbReference type="OrthoDB" id="3169036at2759"/>
<dbReference type="PAN-GO" id="O15069">
    <property type="GO annotations" value="3 GO annotations based on evolutionary models"/>
</dbReference>
<dbReference type="PhylomeDB" id="O15069"/>
<dbReference type="TreeFam" id="TF313348"/>
<dbReference type="PathwayCommons" id="O15069"/>
<dbReference type="SignaLink" id="O15069"/>
<dbReference type="BioGRID-ORCS" id="23148">
    <property type="hits" value="21 hits in 1153 CRISPR screens"/>
</dbReference>
<dbReference type="ChiTaRS" id="NACAD">
    <property type="organism name" value="human"/>
</dbReference>
<dbReference type="GenomeRNAi" id="23148"/>
<dbReference type="Pharos" id="O15069">
    <property type="development level" value="Tdark"/>
</dbReference>
<dbReference type="PRO" id="PR:O15069"/>
<dbReference type="Proteomes" id="UP000005640">
    <property type="component" value="Chromosome 7"/>
</dbReference>
<dbReference type="RNAct" id="O15069">
    <property type="molecule type" value="protein"/>
</dbReference>
<dbReference type="Bgee" id="ENSG00000136274">
    <property type="expression patterns" value="Expressed in inferior vagus X ganglion and 142 other cell types or tissues"/>
</dbReference>
<dbReference type="GO" id="GO:0005737">
    <property type="term" value="C:cytoplasm"/>
    <property type="evidence" value="ECO:0000318"/>
    <property type="project" value="GO_Central"/>
</dbReference>
<dbReference type="GO" id="GO:0005854">
    <property type="term" value="C:nascent polypeptide-associated complex"/>
    <property type="evidence" value="ECO:0007669"/>
    <property type="project" value="InterPro"/>
</dbReference>
<dbReference type="GO" id="GO:0005634">
    <property type="term" value="C:nucleus"/>
    <property type="evidence" value="ECO:0007669"/>
    <property type="project" value="UniProtKB-SubCell"/>
</dbReference>
<dbReference type="GO" id="GO:0051082">
    <property type="term" value="F:unfolded protein binding"/>
    <property type="evidence" value="ECO:0000318"/>
    <property type="project" value="GO_Central"/>
</dbReference>
<dbReference type="GO" id="GO:0006612">
    <property type="term" value="P:protein targeting to membrane"/>
    <property type="evidence" value="ECO:0000318"/>
    <property type="project" value="GO_Central"/>
</dbReference>
<dbReference type="GO" id="GO:0015031">
    <property type="term" value="P:protein transport"/>
    <property type="evidence" value="ECO:0007669"/>
    <property type="project" value="UniProtKB-KW"/>
</dbReference>
<dbReference type="CDD" id="cd22054">
    <property type="entry name" value="NAC_NACA"/>
    <property type="match status" value="1"/>
</dbReference>
<dbReference type="CDD" id="cd14416">
    <property type="entry name" value="UBA_NACAD"/>
    <property type="match status" value="1"/>
</dbReference>
<dbReference type="FunFam" id="2.20.70.30:FF:000002">
    <property type="entry name" value="Nascent polypeptide-associated complex (NAC), alpha subunit"/>
    <property type="match status" value="1"/>
</dbReference>
<dbReference type="FunFam" id="1.10.8.10:FF:000006">
    <property type="entry name" value="Putative nascent polypeptide-associated complex subunit alpha"/>
    <property type="match status" value="1"/>
</dbReference>
<dbReference type="Gene3D" id="1.10.8.10">
    <property type="entry name" value="DNA helicase RuvA subunit, C-terminal domain"/>
    <property type="match status" value="1"/>
</dbReference>
<dbReference type="Gene3D" id="2.20.70.30">
    <property type="entry name" value="Nascent polypeptide-associated complex domain"/>
    <property type="match status" value="1"/>
</dbReference>
<dbReference type="InterPro" id="IPR016641">
    <property type="entry name" value="EGD2/NACA0like"/>
</dbReference>
<dbReference type="InterPro" id="IPR044034">
    <property type="entry name" value="NAC-like_UBA"/>
</dbReference>
<dbReference type="InterPro" id="IPR038187">
    <property type="entry name" value="NAC_A/B_dom_sf"/>
</dbReference>
<dbReference type="InterPro" id="IPR041907">
    <property type="entry name" value="NACAD_UBA"/>
</dbReference>
<dbReference type="InterPro" id="IPR002715">
    <property type="entry name" value="Nas_poly-pep-assoc_cplx_dom"/>
</dbReference>
<dbReference type="PANTHER" id="PTHR21713">
    <property type="entry name" value="NASCENT POLYPEPTIDE ASSOCIATED COMPLEX ALPHA SUBUNIT-RELATED"/>
    <property type="match status" value="1"/>
</dbReference>
<dbReference type="Pfam" id="PF01849">
    <property type="entry name" value="NAC"/>
    <property type="match status" value="1"/>
</dbReference>
<dbReference type="Pfam" id="PF19026">
    <property type="entry name" value="UBA_HYPK"/>
    <property type="match status" value="1"/>
</dbReference>
<dbReference type="SMART" id="SM01407">
    <property type="entry name" value="NAC"/>
    <property type="match status" value="1"/>
</dbReference>
<dbReference type="PROSITE" id="PS51151">
    <property type="entry name" value="NAC_AB"/>
    <property type="match status" value="1"/>
</dbReference>